<reference key="1">
    <citation type="journal article" date="2007" name="Genome Biol.">
        <title>Characterization and modeling of the Haemophilus influenzae core and supragenomes based on the complete genomic sequences of Rd and 12 clinical nontypeable strains.</title>
        <authorList>
            <person name="Hogg J.S."/>
            <person name="Hu F.Z."/>
            <person name="Janto B."/>
            <person name="Boissy R."/>
            <person name="Hayes J."/>
            <person name="Keefe R."/>
            <person name="Post J.C."/>
            <person name="Ehrlich G.D."/>
        </authorList>
    </citation>
    <scope>NUCLEOTIDE SEQUENCE [LARGE SCALE GENOMIC DNA]</scope>
    <source>
        <strain>PittGG</strain>
    </source>
</reference>
<feature type="chain" id="PRO_1000009070" description="Phosphoheptose isomerase">
    <location>
        <begin position="1"/>
        <end position="194"/>
    </location>
</feature>
<feature type="domain" description="SIS" evidence="1">
    <location>
        <begin position="37"/>
        <end position="194"/>
    </location>
</feature>
<feature type="binding site" evidence="1">
    <location>
        <begin position="52"/>
        <end position="54"/>
    </location>
    <ligand>
        <name>substrate</name>
    </ligand>
</feature>
<feature type="binding site" evidence="1">
    <location>
        <position position="61"/>
    </location>
    <ligand>
        <name>Zn(2+)</name>
        <dbReference type="ChEBI" id="CHEBI:29105"/>
    </ligand>
</feature>
<feature type="binding site" evidence="1">
    <location>
        <position position="65"/>
    </location>
    <ligand>
        <name>substrate</name>
    </ligand>
</feature>
<feature type="binding site" evidence="1">
    <location>
        <position position="65"/>
    </location>
    <ligand>
        <name>Zn(2+)</name>
        <dbReference type="ChEBI" id="CHEBI:29105"/>
    </ligand>
</feature>
<feature type="binding site" evidence="1">
    <location>
        <begin position="93"/>
        <end position="94"/>
    </location>
    <ligand>
        <name>substrate</name>
    </ligand>
</feature>
<feature type="binding site" evidence="1">
    <location>
        <begin position="119"/>
        <end position="121"/>
    </location>
    <ligand>
        <name>substrate</name>
    </ligand>
</feature>
<feature type="binding site" evidence="1">
    <location>
        <position position="124"/>
    </location>
    <ligand>
        <name>substrate</name>
    </ligand>
</feature>
<feature type="binding site" evidence="1">
    <location>
        <position position="172"/>
    </location>
    <ligand>
        <name>substrate</name>
    </ligand>
</feature>
<feature type="binding site" evidence="1">
    <location>
        <position position="172"/>
    </location>
    <ligand>
        <name>Zn(2+)</name>
        <dbReference type="ChEBI" id="CHEBI:29105"/>
    </ligand>
</feature>
<feature type="binding site" evidence="1">
    <location>
        <position position="180"/>
    </location>
    <ligand>
        <name>Zn(2+)</name>
        <dbReference type="ChEBI" id="CHEBI:29105"/>
    </ligand>
</feature>
<gene>
    <name evidence="1" type="primary">gmhA</name>
    <name type="ordered locus">CGSHiGG_09600</name>
</gene>
<evidence type="ECO:0000255" key="1">
    <source>
        <dbReference type="HAMAP-Rule" id="MF_00067"/>
    </source>
</evidence>
<organism>
    <name type="scientific">Haemophilus influenzae (strain PittGG)</name>
    <dbReference type="NCBI Taxonomy" id="374931"/>
    <lineage>
        <taxon>Bacteria</taxon>
        <taxon>Pseudomonadati</taxon>
        <taxon>Pseudomonadota</taxon>
        <taxon>Gammaproteobacteria</taxon>
        <taxon>Pasteurellales</taxon>
        <taxon>Pasteurellaceae</taxon>
        <taxon>Haemophilus</taxon>
    </lineage>
</organism>
<accession>A5UIU8</accession>
<comment type="function">
    <text evidence="1">Catalyzes the isomerization of sedoheptulose 7-phosphate in D-glycero-D-manno-heptose 7-phosphate.</text>
</comment>
<comment type="catalytic activity">
    <reaction evidence="1">
        <text>2 D-sedoheptulose 7-phosphate = D-glycero-alpha-D-manno-heptose 7-phosphate + D-glycero-beta-D-manno-heptose 7-phosphate</text>
        <dbReference type="Rhea" id="RHEA:27489"/>
        <dbReference type="ChEBI" id="CHEBI:57483"/>
        <dbReference type="ChEBI" id="CHEBI:60203"/>
        <dbReference type="ChEBI" id="CHEBI:60204"/>
        <dbReference type="EC" id="5.3.1.28"/>
    </reaction>
</comment>
<comment type="cofactor">
    <cofactor evidence="1">
        <name>Zn(2+)</name>
        <dbReference type="ChEBI" id="CHEBI:29105"/>
    </cofactor>
    <text evidence="1">Binds 1 zinc ion per subunit.</text>
</comment>
<comment type="pathway">
    <text evidence="1">Carbohydrate biosynthesis; D-glycero-D-manno-heptose 7-phosphate biosynthesis; D-glycero-alpha-D-manno-heptose 7-phosphate and D-glycero-beta-D-manno-heptose 7-phosphate from sedoheptulose 7-phosphate: step 1/1.</text>
</comment>
<comment type="subunit">
    <text evidence="1">Homotetramer.</text>
</comment>
<comment type="subcellular location">
    <subcellularLocation>
        <location evidence="1">Cytoplasm</location>
    </subcellularLocation>
</comment>
<comment type="miscellaneous">
    <text evidence="1">The reaction produces a racemic mixture of D-glycero-alpha-D-manno-heptose 7-phosphate and D-glycero-beta-D-manno-heptose 7-phosphate.</text>
</comment>
<comment type="similarity">
    <text evidence="1">Belongs to the SIS family. GmhA subfamily.</text>
</comment>
<dbReference type="EC" id="5.3.1.28" evidence="1"/>
<dbReference type="EMBL" id="CP000672">
    <property type="protein sequence ID" value="ABR00704.1"/>
    <property type="molecule type" value="Genomic_DNA"/>
</dbReference>
<dbReference type="SMR" id="A5UIU8"/>
<dbReference type="KEGG" id="hiq:CGSHiGG_09600"/>
<dbReference type="HOGENOM" id="CLU_080999_4_0_6"/>
<dbReference type="UniPathway" id="UPA00041">
    <property type="reaction ID" value="UER00436"/>
</dbReference>
<dbReference type="Proteomes" id="UP000001990">
    <property type="component" value="Chromosome"/>
</dbReference>
<dbReference type="GO" id="GO:0005737">
    <property type="term" value="C:cytoplasm"/>
    <property type="evidence" value="ECO:0007669"/>
    <property type="project" value="UniProtKB-SubCell"/>
</dbReference>
<dbReference type="GO" id="GO:0097367">
    <property type="term" value="F:carbohydrate derivative binding"/>
    <property type="evidence" value="ECO:0007669"/>
    <property type="project" value="InterPro"/>
</dbReference>
<dbReference type="GO" id="GO:0008968">
    <property type="term" value="F:D-sedoheptulose 7-phosphate isomerase activity"/>
    <property type="evidence" value="ECO:0007669"/>
    <property type="project" value="UniProtKB-UniRule"/>
</dbReference>
<dbReference type="GO" id="GO:0008270">
    <property type="term" value="F:zinc ion binding"/>
    <property type="evidence" value="ECO:0007669"/>
    <property type="project" value="UniProtKB-UniRule"/>
</dbReference>
<dbReference type="GO" id="GO:0005975">
    <property type="term" value="P:carbohydrate metabolic process"/>
    <property type="evidence" value="ECO:0007669"/>
    <property type="project" value="UniProtKB-UniRule"/>
</dbReference>
<dbReference type="GO" id="GO:2001061">
    <property type="term" value="P:D-glycero-D-manno-heptose 7-phosphate biosynthetic process"/>
    <property type="evidence" value="ECO:0007669"/>
    <property type="project" value="UniProtKB-UniPathway"/>
</dbReference>
<dbReference type="CDD" id="cd05006">
    <property type="entry name" value="SIS_GmhA"/>
    <property type="match status" value="1"/>
</dbReference>
<dbReference type="Gene3D" id="3.40.50.10490">
    <property type="entry name" value="Glucose-6-phosphate isomerase like protein, domain 1"/>
    <property type="match status" value="1"/>
</dbReference>
<dbReference type="HAMAP" id="MF_00067">
    <property type="entry name" value="GmhA"/>
    <property type="match status" value="1"/>
</dbReference>
<dbReference type="InterPro" id="IPR035461">
    <property type="entry name" value="GmhA/DiaA"/>
</dbReference>
<dbReference type="InterPro" id="IPR004515">
    <property type="entry name" value="Phosphoheptose_Isoase"/>
</dbReference>
<dbReference type="InterPro" id="IPR001347">
    <property type="entry name" value="SIS_dom"/>
</dbReference>
<dbReference type="InterPro" id="IPR046348">
    <property type="entry name" value="SIS_dom_sf"/>
</dbReference>
<dbReference type="InterPro" id="IPR050099">
    <property type="entry name" value="SIS_GmhA/DiaA_subfam"/>
</dbReference>
<dbReference type="NCBIfam" id="TIGR00441">
    <property type="entry name" value="gmhA"/>
    <property type="match status" value="1"/>
</dbReference>
<dbReference type="NCBIfam" id="NF001628">
    <property type="entry name" value="PRK00414.1"/>
    <property type="match status" value="1"/>
</dbReference>
<dbReference type="PANTHER" id="PTHR30390:SF7">
    <property type="entry name" value="PHOSPHOHEPTOSE ISOMERASE"/>
    <property type="match status" value="1"/>
</dbReference>
<dbReference type="PANTHER" id="PTHR30390">
    <property type="entry name" value="SEDOHEPTULOSE 7-PHOSPHATE ISOMERASE / DNAA INITIATOR-ASSOCIATING FACTOR FOR REPLICATION INITIATION"/>
    <property type="match status" value="1"/>
</dbReference>
<dbReference type="Pfam" id="PF13580">
    <property type="entry name" value="SIS_2"/>
    <property type="match status" value="1"/>
</dbReference>
<dbReference type="SUPFAM" id="SSF53697">
    <property type="entry name" value="SIS domain"/>
    <property type="match status" value="1"/>
</dbReference>
<dbReference type="PROSITE" id="PS51464">
    <property type="entry name" value="SIS"/>
    <property type="match status" value="1"/>
</dbReference>
<sequence length="194" mass="21333">MYLDQIKAELVEAQDVLNKFISDENNIKLIQEAALLISNSFKQGGKVLSCGNGGSHCDAMHFAEELTGRYRENRPGYPAIAISDASHLSCVSNDFGYEYVFSRYVEAVGQKGDVLFGLSTSGNSKNILNAIEAAKAKGMKVIAMTGKDGGKMAGLADVEIRVPHFRYADRIQEIHIKVIHILMMLIEFEMAKQA</sequence>
<keyword id="KW-0119">Carbohydrate metabolism</keyword>
<keyword id="KW-0963">Cytoplasm</keyword>
<keyword id="KW-0413">Isomerase</keyword>
<keyword id="KW-0479">Metal-binding</keyword>
<keyword id="KW-0862">Zinc</keyword>
<name>GMHA_HAEIG</name>
<protein>
    <recommendedName>
        <fullName evidence="1">Phosphoheptose isomerase</fullName>
        <ecNumber evidence="1">5.3.1.28</ecNumber>
    </recommendedName>
    <alternativeName>
        <fullName evidence="1">Sedoheptulose 7-phosphate isomerase</fullName>
    </alternativeName>
</protein>
<proteinExistence type="inferred from homology"/>